<name>ERPA_SHEHH</name>
<accession>B0TIR0</accession>
<dbReference type="EMBL" id="CP000931">
    <property type="protein sequence ID" value="ABZ75605.1"/>
    <property type="molecule type" value="Genomic_DNA"/>
</dbReference>
<dbReference type="RefSeq" id="WP_012276152.1">
    <property type="nucleotide sequence ID" value="NC_010334.1"/>
</dbReference>
<dbReference type="SMR" id="B0TIR0"/>
<dbReference type="STRING" id="458817.Shal_1036"/>
<dbReference type="KEGG" id="shl:Shal_1036"/>
<dbReference type="eggNOG" id="COG0316">
    <property type="taxonomic scope" value="Bacteria"/>
</dbReference>
<dbReference type="HOGENOM" id="CLU_069054_5_3_6"/>
<dbReference type="OrthoDB" id="9801228at2"/>
<dbReference type="Proteomes" id="UP000001317">
    <property type="component" value="Chromosome"/>
</dbReference>
<dbReference type="GO" id="GO:0005829">
    <property type="term" value="C:cytosol"/>
    <property type="evidence" value="ECO:0007669"/>
    <property type="project" value="TreeGrafter"/>
</dbReference>
<dbReference type="GO" id="GO:0051537">
    <property type="term" value="F:2 iron, 2 sulfur cluster binding"/>
    <property type="evidence" value="ECO:0007669"/>
    <property type="project" value="UniProtKB-ARBA"/>
</dbReference>
<dbReference type="GO" id="GO:0051539">
    <property type="term" value="F:4 iron, 4 sulfur cluster binding"/>
    <property type="evidence" value="ECO:0007669"/>
    <property type="project" value="TreeGrafter"/>
</dbReference>
<dbReference type="GO" id="GO:0005506">
    <property type="term" value="F:iron ion binding"/>
    <property type="evidence" value="ECO:0007669"/>
    <property type="project" value="UniProtKB-UniRule"/>
</dbReference>
<dbReference type="GO" id="GO:0016226">
    <property type="term" value="P:iron-sulfur cluster assembly"/>
    <property type="evidence" value="ECO:0007669"/>
    <property type="project" value="UniProtKB-UniRule"/>
</dbReference>
<dbReference type="FunFam" id="2.60.300.12:FF:000002">
    <property type="entry name" value="Iron-sulfur cluster insertion protein ErpA"/>
    <property type="match status" value="1"/>
</dbReference>
<dbReference type="Gene3D" id="2.60.300.12">
    <property type="entry name" value="HesB-like domain"/>
    <property type="match status" value="1"/>
</dbReference>
<dbReference type="HAMAP" id="MF_01380">
    <property type="entry name" value="Fe_S_insert_ErpA"/>
    <property type="match status" value="1"/>
</dbReference>
<dbReference type="InterPro" id="IPR000361">
    <property type="entry name" value="FeS_biogenesis"/>
</dbReference>
<dbReference type="InterPro" id="IPR016092">
    <property type="entry name" value="FeS_cluster_insertion"/>
</dbReference>
<dbReference type="InterPro" id="IPR017870">
    <property type="entry name" value="FeS_cluster_insertion_CS"/>
</dbReference>
<dbReference type="InterPro" id="IPR023063">
    <property type="entry name" value="FeS_cluster_insertion_RrpA"/>
</dbReference>
<dbReference type="InterPro" id="IPR035903">
    <property type="entry name" value="HesB-like_dom_sf"/>
</dbReference>
<dbReference type="NCBIfam" id="TIGR00049">
    <property type="entry name" value="iron-sulfur cluster assembly accessory protein"/>
    <property type="match status" value="1"/>
</dbReference>
<dbReference type="NCBIfam" id="NF010147">
    <property type="entry name" value="PRK13623.1"/>
    <property type="match status" value="1"/>
</dbReference>
<dbReference type="PANTHER" id="PTHR43011">
    <property type="entry name" value="IRON-SULFUR CLUSTER ASSEMBLY 2 HOMOLOG, MITOCHONDRIAL"/>
    <property type="match status" value="1"/>
</dbReference>
<dbReference type="PANTHER" id="PTHR43011:SF1">
    <property type="entry name" value="IRON-SULFUR CLUSTER ASSEMBLY 2 HOMOLOG, MITOCHONDRIAL"/>
    <property type="match status" value="1"/>
</dbReference>
<dbReference type="Pfam" id="PF01521">
    <property type="entry name" value="Fe-S_biosyn"/>
    <property type="match status" value="1"/>
</dbReference>
<dbReference type="SUPFAM" id="SSF89360">
    <property type="entry name" value="HesB-like domain"/>
    <property type="match status" value="1"/>
</dbReference>
<dbReference type="PROSITE" id="PS01152">
    <property type="entry name" value="HESB"/>
    <property type="match status" value="1"/>
</dbReference>
<keyword id="KW-0408">Iron</keyword>
<keyword id="KW-0411">Iron-sulfur</keyword>
<keyword id="KW-0479">Metal-binding</keyword>
<reference key="1">
    <citation type="submission" date="2008-01" db="EMBL/GenBank/DDBJ databases">
        <title>Complete sequence of Shewanella halifaxensis HAW-EB4.</title>
        <authorList>
            <consortium name="US DOE Joint Genome Institute"/>
            <person name="Copeland A."/>
            <person name="Lucas S."/>
            <person name="Lapidus A."/>
            <person name="Glavina del Rio T."/>
            <person name="Dalin E."/>
            <person name="Tice H."/>
            <person name="Bruce D."/>
            <person name="Goodwin L."/>
            <person name="Pitluck S."/>
            <person name="Sims D."/>
            <person name="Brettin T."/>
            <person name="Detter J.C."/>
            <person name="Han C."/>
            <person name="Kuske C.R."/>
            <person name="Schmutz J."/>
            <person name="Larimer F."/>
            <person name="Land M."/>
            <person name="Hauser L."/>
            <person name="Kyrpides N."/>
            <person name="Kim E."/>
            <person name="Zhao J.-S."/>
            <person name="Richardson P."/>
        </authorList>
    </citation>
    <scope>NUCLEOTIDE SEQUENCE [LARGE SCALE GENOMIC DNA]</scope>
    <source>
        <strain>HAW-EB4</strain>
    </source>
</reference>
<feature type="chain" id="PRO_1000087301" description="Iron-sulfur cluster insertion protein ErpA">
    <location>
        <begin position="1"/>
        <end position="116"/>
    </location>
</feature>
<feature type="binding site" evidence="1">
    <location>
        <position position="44"/>
    </location>
    <ligand>
        <name>iron-sulfur cluster</name>
        <dbReference type="ChEBI" id="CHEBI:30408"/>
    </ligand>
</feature>
<feature type="binding site" evidence="1">
    <location>
        <position position="108"/>
    </location>
    <ligand>
        <name>iron-sulfur cluster</name>
        <dbReference type="ChEBI" id="CHEBI:30408"/>
    </ligand>
</feature>
<feature type="binding site" evidence="1">
    <location>
        <position position="110"/>
    </location>
    <ligand>
        <name>iron-sulfur cluster</name>
        <dbReference type="ChEBI" id="CHEBI:30408"/>
    </ligand>
</feature>
<evidence type="ECO:0000255" key="1">
    <source>
        <dbReference type="HAMAP-Rule" id="MF_01380"/>
    </source>
</evidence>
<organism>
    <name type="scientific">Shewanella halifaxensis (strain HAW-EB4)</name>
    <dbReference type="NCBI Taxonomy" id="458817"/>
    <lineage>
        <taxon>Bacteria</taxon>
        <taxon>Pseudomonadati</taxon>
        <taxon>Pseudomonadota</taxon>
        <taxon>Gammaproteobacteria</taxon>
        <taxon>Alteromonadales</taxon>
        <taxon>Shewanellaceae</taxon>
        <taxon>Shewanella</taxon>
    </lineage>
</organism>
<sequence>MTEQAEDALPIRFTDAAASKVKTLLEEEENDALKLRVYVTGGGCSGFQYGFTFDEKINEGDYTVEKQGVQLVVDPMSLQYLVGGEVDYTSGLEGSRFFVKNPNATTTCGCGASFSV</sequence>
<gene>
    <name evidence="1" type="primary">erpA</name>
    <name type="ordered locus">Shal_1036</name>
</gene>
<protein>
    <recommendedName>
        <fullName evidence="1">Iron-sulfur cluster insertion protein ErpA</fullName>
    </recommendedName>
</protein>
<comment type="function">
    <text evidence="1">Required for insertion of 4Fe-4S clusters for at least IspG.</text>
</comment>
<comment type="cofactor">
    <cofactor evidence="1">
        <name>iron-sulfur cluster</name>
        <dbReference type="ChEBI" id="CHEBI:30408"/>
    </cofactor>
    <text evidence="1">Binds 1 iron-sulfur cluster per subunit.</text>
</comment>
<comment type="subunit">
    <text evidence="1">Homodimer.</text>
</comment>
<comment type="similarity">
    <text evidence="1">Belongs to the HesB/IscA family.</text>
</comment>
<proteinExistence type="inferred from homology"/>